<proteinExistence type="evidence at protein level"/>
<evidence type="ECO:0000255" key="1">
    <source>
        <dbReference type="PROSITE-ProRule" id="PRU00605"/>
    </source>
</evidence>
<evidence type="ECO:0000256" key="2">
    <source>
        <dbReference type="SAM" id="MobiDB-lite"/>
    </source>
</evidence>
<evidence type="ECO:0000269" key="3">
    <source>
    </source>
</evidence>
<gene>
    <name type="ordered locus">Rv2859c</name>
</gene>
<name>Y2859_MYCTU</name>
<accession>O33341</accession>
<accession>L0TAV0</accession>
<feature type="chain" id="PRO_0000396115" description="Putative glutamine amidotransferase Rv2859c">
    <location>
        <begin position="1"/>
        <end position="308"/>
    </location>
</feature>
<feature type="domain" description="Glutamine amidotransferase type-1" evidence="1">
    <location>
        <begin position="78"/>
        <end position="301"/>
    </location>
</feature>
<feature type="region of interest" description="Disordered" evidence="2">
    <location>
        <begin position="1"/>
        <end position="62"/>
    </location>
</feature>
<feature type="compositionally biased region" description="Low complexity" evidence="2">
    <location>
        <begin position="13"/>
        <end position="24"/>
    </location>
</feature>
<feature type="compositionally biased region" description="Low complexity" evidence="2">
    <location>
        <begin position="31"/>
        <end position="42"/>
    </location>
</feature>
<feature type="compositionally biased region" description="Low complexity" evidence="2">
    <location>
        <begin position="49"/>
        <end position="61"/>
    </location>
</feature>
<feature type="active site" description="Nucleophile" evidence="1">
    <location>
        <position position="177"/>
    </location>
</feature>
<feature type="active site" evidence="1">
    <location>
        <position position="277"/>
    </location>
</feature>
<feature type="active site" evidence="1">
    <location>
        <position position="279"/>
    </location>
</feature>
<feature type="cross-link" description="Isoglutamyl lysine isopeptide (Lys-Gln) (interchain with Q-Cter in protein Pup)" evidence="3">
    <location>
        <position position="289"/>
    </location>
</feature>
<reference key="1">
    <citation type="journal article" date="1998" name="Nature">
        <title>Deciphering the biology of Mycobacterium tuberculosis from the complete genome sequence.</title>
        <authorList>
            <person name="Cole S.T."/>
            <person name="Brosch R."/>
            <person name="Parkhill J."/>
            <person name="Garnier T."/>
            <person name="Churcher C.M."/>
            <person name="Harris D.E."/>
            <person name="Gordon S.V."/>
            <person name="Eiglmeier K."/>
            <person name="Gas S."/>
            <person name="Barry C.E. III"/>
            <person name="Tekaia F."/>
            <person name="Badcock K."/>
            <person name="Basham D."/>
            <person name="Brown D."/>
            <person name="Chillingworth T."/>
            <person name="Connor R."/>
            <person name="Davies R.M."/>
            <person name="Devlin K."/>
            <person name="Feltwell T."/>
            <person name="Gentles S."/>
            <person name="Hamlin N."/>
            <person name="Holroyd S."/>
            <person name="Hornsby T."/>
            <person name="Jagels K."/>
            <person name="Krogh A."/>
            <person name="McLean J."/>
            <person name="Moule S."/>
            <person name="Murphy L.D."/>
            <person name="Oliver S."/>
            <person name="Osborne J."/>
            <person name="Quail M.A."/>
            <person name="Rajandream M.A."/>
            <person name="Rogers J."/>
            <person name="Rutter S."/>
            <person name="Seeger K."/>
            <person name="Skelton S."/>
            <person name="Squares S."/>
            <person name="Squares R."/>
            <person name="Sulston J.E."/>
            <person name="Taylor K."/>
            <person name="Whitehead S."/>
            <person name="Barrell B.G."/>
        </authorList>
    </citation>
    <scope>NUCLEOTIDE SEQUENCE [LARGE SCALE GENOMIC DNA]</scope>
    <source>
        <strain>ATCC 25618 / H37Rv</strain>
    </source>
</reference>
<reference key="2">
    <citation type="journal article" date="2010" name="PLoS ONE">
        <title>Prokaryotic ubiquitin-like protein (Pup) proteome of Mycobacterium tuberculosis.</title>
        <authorList>
            <person name="Festa R.A."/>
            <person name="McAllister F."/>
            <person name="Pearce M.J."/>
            <person name="Mintseris J."/>
            <person name="Burns K.E."/>
            <person name="Gygi S.P."/>
            <person name="Darwin K.H."/>
        </authorList>
    </citation>
    <scope>PUPYLATION AT LYS-289</scope>
    <scope>IDENTIFICATION BY MASS SPECTROMETRY</scope>
    <source>
        <strain>ATCC 25618 / H37Rv</strain>
    </source>
</reference>
<reference key="3">
    <citation type="journal article" date="2011" name="Mol. Cell. Proteomics">
        <title>Proteogenomic analysis of Mycobacterium tuberculosis by high resolution mass spectrometry.</title>
        <authorList>
            <person name="Kelkar D.S."/>
            <person name="Kumar D."/>
            <person name="Kumar P."/>
            <person name="Balakrishnan L."/>
            <person name="Muthusamy B."/>
            <person name="Yadav A.K."/>
            <person name="Shrivastava P."/>
            <person name="Marimuthu A."/>
            <person name="Anand S."/>
            <person name="Sundaram H."/>
            <person name="Kingsbury R."/>
            <person name="Harsha H.C."/>
            <person name="Nair B."/>
            <person name="Prasad T.S."/>
            <person name="Chauhan D.S."/>
            <person name="Katoch K."/>
            <person name="Katoch V.M."/>
            <person name="Kumar P."/>
            <person name="Chaerkady R."/>
            <person name="Ramachandran S."/>
            <person name="Dash D."/>
            <person name="Pandey A."/>
        </authorList>
    </citation>
    <scope>IDENTIFICATION BY MASS SPECTROMETRY [LARGE SCALE ANALYSIS]</scope>
    <source>
        <strain>ATCC 25618 / H37Rv</strain>
    </source>
</reference>
<organism>
    <name type="scientific">Mycobacterium tuberculosis (strain ATCC 25618 / H37Rv)</name>
    <dbReference type="NCBI Taxonomy" id="83332"/>
    <lineage>
        <taxon>Bacteria</taxon>
        <taxon>Bacillati</taxon>
        <taxon>Actinomycetota</taxon>
        <taxon>Actinomycetes</taxon>
        <taxon>Mycobacteriales</taxon>
        <taxon>Mycobacteriaceae</taxon>
        <taxon>Mycobacterium</taxon>
        <taxon>Mycobacterium tuberculosis complex</taxon>
    </lineage>
</organism>
<sequence>MDLSASRSDGGDPLRPASPRLRSPVSDGGDPLRPASPRLRSPVSDGGDPLRPASPRLRSPLGASRPVVGLTAYLEQVRTGVWDIPAGYLPADYFEGITMAGGVAVLLPPQPVDPESVGCVLDSLHALVITGGYDLDPAAYGQEPHPATDHPRPGRDAWEFALLRGALQRGMPVLGICRGTQVLNVALGGTLHQHLPDILGHSGHRAGNGVFTRLPVHTASGTRLAELIGESADVPCYHHQAIDQVGEGLVVSAVDVDGVIEALELPGDTFVLAVQWHPEKSLDDLRLFKALVDAASGYAGRQSQAEPR</sequence>
<protein>
    <recommendedName>
        <fullName>Putative glutamine amidotransferase Rv2859c</fullName>
        <ecNumber>2.4.2.-</ecNumber>
    </recommendedName>
</protein>
<dbReference type="EC" id="2.4.2.-"/>
<dbReference type="EMBL" id="AL123456">
    <property type="protein sequence ID" value="CCP45660.1"/>
    <property type="molecule type" value="Genomic_DNA"/>
</dbReference>
<dbReference type="PIR" id="E70885">
    <property type="entry name" value="E70885"/>
</dbReference>
<dbReference type="RefSeq" id="NP_217375.1">
    <property type="nucleotide sequence ID" value="NC_000962.3"/>
</dbReference>
<dbReference type="RefSeq" id="WP_003900586.1">
    <property type="nucleotide sequence ID" value="NZ_NVQJ01000006.1"/>
</dbReference>
<dbReference type="SMR" id="O33341"/>
<dbReference type="STRING" id="83332.Rv2859c"/>
<dbReference type="PaxDb" id="83332-Rv2859c"/>
<dbReference type="DNASU" id="887495"/>
<dbReference type="GeneID" id="887495"/>
<dbReference type="KEGG" id="mtu:Rv2859c"/>
<dbReference type="KEGG" id="mtv:RVBD_2859c"/>
<dbReference type="TubercuList" id="Rv2859c"/>
<dbReference type="eggNOG" id="COG2071">
    <property type="taxonomic scope" value="Bacteria"/>
</dbReference>
<dbReference type="InParanoid" id="O33341"/>
<dbReference type="OrthoDB" id="9813383at2"/>
<dbReference type="PhylomeDB" id="O33341"/>
<dbReference type="Proteomes" id="UP000001584">
    <property type="component" value="Chromosome"/>
</dbReference>
<dbReference type="GO" id="GO:0033969">
    <property type="term" value="F:gamma-glutamyl-gamma-aminobutyrate hydrolase activity"/>
    <property type="evidence" value="ECO:0000318"/>
    <property type="project" value="GO_Central"/>
</dbReference>
<dbReference type="GO" id="GO:0016740">
    <property type="term" value="F:transferase activity"/>
    <property type="evidence" value="ECO:0007669"/>
    <property type="project" value="UniProtKB-KW"/>
</dbReference>
<dbReference type="GO" id="GO:0006598">
    <property type="term" value="P:polyamine catabolic process"/>
    <property type="evidence" value="ECO:0000318"/>
    <property type="project" value="GO_Central"/>
</dbReference>
<dbReference type="CDD" id="cd01745">
    <property type="entry name" value="GATase1_2"/>
    <property type="match status" value="1"/>
</dbReference>
<dbReference type="FunFam" id="3.40.50.880:FF:000030">
    <property type="entry name" value="Gamma-glutamyl-gamma-aminobutyrate hydrolase PuuD"/>
    <property type="match status" value="1"/>
</dbReference>
<dbReference type="Gene3D" id="3.40.50.880">
    <property type="match status" value="1"/>
</dbReference>
<dbReference type="InterPro" id="IPR029062">
    <property type="entry name" value="Class_I_gatase-like"/>
</dbReference>
<dbReference type="InterPro" id="IPR011697">
    <property type="entry name" value="Peptidase_C26"/>
</dbReference>
<dbReference type="InterPro" id="IPR044668">
    <property type="entry name" value="PuuD-like"/>
</dbReference>
<dbReference type="PANTHER" id="PTHR43235">
    <property type="entry name" value="GLUTAMINE AMIDOTRANSFERASE PB2B2.05-RELATED"/>
    <property type="match status" value="1"/>
</dbReference>
<dbReference type="PANTHER" id="PTHR43235:SF1">
    <property type="entry name" value="GLUTAMINE AMIDOTRANSFERASE PB2B2.05-RELATED"/>
    <property type="match status" value="1"/>
</dbReference>
<dbReference type="Pfam" id="PF07722">
    <property type="entry name" value="Peptidase_C26"/>
    <property type="match status" value="1"/>
</dbReference>
<dbReference type="SUPFAM" id="SSF52317">
    <property type="entry name" value="Class I glutamine amidotransferase-like"/>
    <property type="match status" value="1"/>
</dbReference>
<dbReference type="PROSITE" id="PS51273">
    <property type="entry name" value="GATASE_TYPE_1"/>
    <property type="match status" value="1"/>
</dbReference>
<keyword id="KW-0315">Glutamine amidotransferase</keyword>
<keyword id="KW-1017">Isopeptide bond</keyword>
<keyword id="KW-1185">Reference proteome</keyword>
<keyword id="KW-0808">Transferase</keyword>
<keyword id="KW-0832">Ubl conjugation</keyword>